<accession>B2VGT5</accession>
<name>OBG_ERWT9</name>
<reference key="1">
    <citation type="journal article" date="2008" name="Environ. Microbiol.">
        <title>The genome of Erwinia tasmaniensis strain Et1/99, a non-pathogenic bacterium in the genus Erwinia.</title>
        <authorList>
            <person name="Kube M."/>
            <person name="Migdoll A.M."/>
            <person name="Mueller I."/>
            <person name="Kuhl H."/>
            <person name="Beck A."/>
            <person name="Reinhardt R."/>
            <person name="Geider K."/>
        </authorList>
    </citation>
    <scope>NUCLEOTIDE SEQUENCE [LARGE SCALE GENOMIC DNA]</scope>
    <source>
        <strain>DSM 17950 / CFBP 7177 / CIP 109463 / NCPPB 4357 / Et1/99</strain>
    </source>
</reference>
<sequence>MKFVDEATILVVAGDGGNGCVSFRREKYIPRGGPDGGDGGDGGDVYMQADENLNTLIDYRFEKSFRAERGQNGQSRDCTGKRGNDILIKVPVGTRIIDQGTGETLGDMTHHQQKMMVAKGGWHGLGNTRFKSSVNRTPRQKTMGTPGEKRDLQLELMLLADVGMLGLPNAGKSTFIRAVSAAKPKVADYPFTTLVPSLGVVRMDSEQSFVVADIPGLIEGASEGAGLGIRFLKHLERCRVLLHTIDLAPIDESDPVENARIILGELEKYSEKLFQKPRWLVFNKVDLLDEEEAESRAKAIAEALGWTEKYYLISAANRAGVNALCWDVMAFIKANPKEAELVAKQPEKVEFMWDDYHRQQLEEAQPEVEEDDDWDDDWDEDDEEGVETIYQR</sequence>
<feature type="chain" id="PRO_0000385908" description="GTPase Obg">
    <location>
        <begin position="1"/>
        <end position="392"/>
    </location>
</feature>
<feature type="domain" description="Obg" evidence="2">
    <location>
        <begin position="1"/>
        <end position="159"/>
    </location>
</feature>
<feature type="domain" description="OBG-type G" evidence="1">
    <location>
        <begin position="160"/>
        <end position="333"/>
    </location>
</feature>
<feature type="region of interest" description="Disordered" evidence="3">
    <location>
        <begin position="127"/>
        <end position="146"/>
    </location>
</feature>
<feature type="region of interest" description="Disordered" evidence="3">
    <location>
        <begin position="360"/>
        <end position="392"/>
    </location>
</feature>
<feature type="compositionally biased region" description="Polar residues" evidence="3">
    <location>
        <begin position="129"/>
        <end position="143"/>
    </location>
</feature>
<feature type="compositionally biased region" description="Acidic residues" evidence="3">
    <location>
        <begin position="364"/>
        <end position="386"/>
    </location>
</feature>
<feature type="binding site" evidence="1">
    <location>
        <begin position="166"/>
        <end position="173"/>
    </location>
    <ligand>
        <name>GTP</name>
        <dbReference type="ChEBI" id="CHEBI:37565"/>
    </ligand>
</feature>
<feature type="binding site" evidence="1">
    <location>
        <position position="173"/>
    </location>
    <ligand>
        <name>Mg(2+)</name>
        <dbReference type="ChEBI" id="CHEBI:18420"/>
    </ligand>
</feature>
<feature type="binding site" evidence="1">
    <location>
        <begin position="191"/>
        <end position="195"/>
    </location>
    <ligand>
        <name>GTP</name>
        <dbReference type="ChEBI" id="CHEBI:37565"/>
    </ligand>
</feature>
<feature type="binding site" evidence="1">
    <location>
        <position position="193"/>
    </location>
    <ligand>
        <name>Mg(2+)</name>
        <dbReference type="ChEBI" id="CHEBI:18420"/>
    </ligand>
</feature>
<feature type="binding site" evidence="1">
    <location>
        <begin position="213"/>
        <end position="216"/>
    </location>
    <ligand>
        <name>GTP</name>
        <dbReference type="ChEBI" id="CHEBI:37565"/>
    </ligand>
</feature>
<feature type="binding site" evidence="1">
    <location>
        <begin position="283"/>
        <end position="286"/>
    </location>
    <ligand>
        <name>GTP</name>
        <dbReference type="ChEBI" id="CHEBI:37565"/>
    </ligand>
</feature>
<feature type="binding site" evidence="1">
    <location>
        <begin position="314"/>
        <end position="316"/>
    </location>
    <ligand>
        <name>GTP</name>
        <dbReference type="ChEBI" id="CHEBI:37565"/>
    </ligand>
</feature>
<comment type="function">
    <text evidence="1">An essential GTPase which binds GTP, GDP and possibly (p)ppGpp with moderate affinity, with high nucleotide exchange rates and a fairly low GTP hydrolysis rate. Plays a role in control of the cell cycle, stress response, ribosome biogenesis and in those bacteria that undergo differentiation, in morphogenesis control.</text>
</comment>
<comment type="cofactor">
    <cofactor evidence="1">
        <name>Mg(2+)</name>
        <dbReference type="ChEBI" id="CHEBI:18420"/>
    </cofactor>
</comment>
<comment type="subunit">
    <text evidence="1">Monomer.</text>
</comment>
<comment type="subcellular location">
    <subcellularLocation>
        <location evidence="1">Cytoplasm</location>
    </subcellularLocation>
</comment>
<comment type="similarity">
    <text evidence="1">Belongs to the TRAFAC class OBG-HflX-like GTPase superfamily. OBG GTPase family.</text>
</comment>
<gene>
    <name evidence="1" type="primary">obg</name>
    <name type="ordered locus">ETA_03340</name>
</gene>
<proteinExistence type="inferred from homology"/>
<keyword id="KW-0963">Cytoplasm</keyword>
<keyword id="KW-0342">GTP-binding</keyword>
<keyword id="KW-0378">Hydrolase</keyword>
<keyword id="KW-0460">Magnesium</keyword>
<keyword id="KW-0479">Metal-binding</keyword>
<keyword id="KW-0547">Nucleotide-binding</keyword>
<keyword id="KW-1185">Reference proteome</keyword>
<protein>
    <recommendedName>
        <fullName evidence="1">GTPase Obg</fullName>
        <ecNumber evidence="1">3.6.5.-</ecNumber>
    </recommendedName>
    <alternativeName>
        <fullName evidence="1">GTP-binding protein Obg</fullName>
    </alternativeName>
</protein>
<evidence type="ECO:0000255" key="1">
    <source>
        <dbReference type="HAMAP-Rule" id="MF_01454"/>
    </source>
</evidence>
<evidence type="ECO:0000255" key="2">
    <source>
        <dbReference type="PROSITE-ProRule" id="PRU01231"/>
    </source>
</evidence>
<evidence type="ECO:0000256" key="3">
    <source>
        <dbReference type="SAM" id="MobiDB-lite"/>
    </source>
</evidence>
<organism>
    <name type="scientific">Erwinia tasmaniensis (strain DSM 17950 / CFBP 7177 / CIP 109463 / NCPPB 4357 / Et1/99)</name>
    <dbReference type="NCBI Taxonomy" id="465817"/>
    <lineage>
        <taxon>Bacteria</taxon>
        <taxon>Pseudomonadati</taxon>
        <taxon>Pseudomonadota</taxon>
        <taxon>Gammaproteobacteria</taxon>
        <taxon>Enterobacterales</taxon>
        <taxon>Erwiniaceae</taxon>
        <taxon>Erwinia</taxon>
    </lineage>
</organism>
<dbReference type="EC" id="3.6.5.-" evidence="1"/>
<dbReference type="EMBL" id="CU468135">
    <property type="protein sequence ID" value="CAO95380.1"/>
    <property type="molecule type" value="Genomic_DNA"/>
</dbReference>
<dbReference type="RefSeq" id="WP_012440095.1">
    <property type="nucleotide sequence ID" value="NC_010694.1"/>
</dbReference>
<dbReference type="SMR" id="B2VGT5"/>
<dbReference type="STRING" id="465817.ETA_03340"/>
<dbReference type="KEGG" id="eta:ETA_03340"/>
<dbReference type="eggNOG" id="COG0536">
    <property type="taxonomic scope" value="Bacteria"/>
</dbReference>
<dbReference type="HOGENOM" id="CLU_011747_2_0_6"/>
<dbReference type="OrthoDB" id="9807318at2"/>
<dbReference type="Proteomes" id="UP000001726">
    <property type="component" value="Chromosome"/>
</dbReference>
<dbReference type="GO" id="GO:0005737">
    <property type="term" value="C:cytoplasm"/>
    <property type="evidence" value="ECO:0007669"/>
    <property type="project" value="UniProtKB-SubCell"/>
</dbReference>
<dbReference type="GO" id="GO:0005525">
    <property type="term" value="F:GTP binding"/>
    <property type="evidence" value="ECO:0007669"/>
    <property type="project" value="UniProtKB-UniRule"/>
</dbReference>
<dbReference type="GO" id="GO:0003924">
    <property type="term" value="F:GTPase activity"/>
    <property type="evidence" value="ECO:0007669"/>
    <property type="project" value="UniProtKB-UniRule"/>
</dbReference>
<dbReference type="GO" id="GO:0000287">
    <property type="term" value="F:magnesium ion binding"/>
    <property type="evidence" value="ECO:0007669"/>
    <property type="project" value="InterPro"/>
</dbReference>
<dbReference type="GO" id="GO:0042254">
    <property type="term" value="P:ribosome biogenesis"/>
    <property type="evidence" value="ECO:0007669"/>
    <property type="project" value="UniProtKB-UniRule"/>
</dbReference>
<dbReference type="CDD" id="cd01898">
    <property type="entry name" value="Obg"/>
    <property type="match status" value="1"/>
</dbReference>
<dbReference type="FunFam" id="2.70.210.12:FF:000001">
    <property type="entry name" value="GTPase Obg"/>
    <property type="match status" value="1"/>
</dbReference>
<dbReference type="FunFam" id="3.40.50.300:FF:000185">
    <property type="entry name" value="GTPase Obg"/>
    <property type="match status" value="1"/>
</dbReference>
<dbReference type="Gene3D" id="2.70.210.12">
    <property type="entry name" value="GTP1/OBG domain"/>
    <property type="match status" value="1"/>
</dbReference>
<dbReference type="Gene3D" id="3.40.50.300">
    <property type="entry name" value="P-loop containing nucleotide triphosphate hydrolases"/>
    <property type="match status" value="1"/>
</dbReference>
<dbReference type="HAMAP" id="MF_01454">
    <property type="entry name" value="GTPase_Obg"/>
    <property type="match status" value="1"/>
</dbReference>
<dbReference type="InterPro" id="IPR031167">
    <property type="entry name" value="G_OBG"/>
</dbReference>
<dbReference type="InterPro" id="IPR006073">
    <property type="entry name" value="GTP-bd"/>
</dbReference>
<dbReference type="InterPro" id="IPR014100">
    <property type="entry name" value="GTP-bd_Obg/CgtA"/>
</dbReference>
<dbReference type="InterPro" id="IPR006074">
    <property type="entry name" value="GTP1-OBG_CS"/>
</dbReference>
<dbReference type="InterPro" id="IPR006169">
    <property type="entry name" value="GTP1_OBG_dom"/>
</dbReference>
<dbReference type="InterPro" id="IPR036726">
    <property type="entry name" value="GTP1_OBG_dom_sf"/>
</dbReference>
<dbReference type="InterPro" id="IPR045086">
    <property type="entry name" value="OBG_GTPase"/>
</dbReference>
<dbReference type="InterPro" id="IPR027417">
    <property type="entry name" value="P-loop_NTPase"/>
</dbReference>
<dbReference type="NCBIfam" id="TIGR02729">
    <property type="entry name" value="Obg_CgtA"/>
    <property type="match status" value="1"/>
</dbReference>
<dbReference type="NCBIfam" id="NF008955">
    <property type="entry name" value="PRK12297.1"/>
    <property type="match status" value="1"/>
</dbReference>
<dbReference type="NCBIfam" id="NF008956">
    <property type="entry name" value="PRK12299.1"/>
    <property type="match status" value="1"/>
</dbReference>
<dbReference type="PANTHER" id="PTHR11702">
    <property type="entry name" value="DEVELOPMENTALLY REGULATED GTP-BINDING PROTEIN-RELATED"/>
    <property type="match status" value="1"/>
</dbReference>
<dbReference type="PANTHER" id="PTHR11702:SF31">
    <property type="entry name" value="MITOCHONDRIAL RIBOSOME-ASSOCIATED GTPASE 2"/>
    <property type="match status" value="1"/>
</dbReference>
<dbReference type="Pfam" id="PF01018">
    <property type="entry name" value="GTP1_OBG"/>
    <property type="match status" value="1"/>
</dbReference>
<dbReference type="Pfam" id="PF01926">
    <property type="entry name" value="MMR_HSR1"/>
    <property type="match status" value="1"/>
</dbReference>
<dbReference type="PIRSF" id="PIRSF002401">
    <property type="entry name" value="GTP_bd_Obg/CgtA"/>
    <property type="match status" value="1"/>
</dbReference>
<dbReference type="PRINTS" id="PR00326">
    <property type="entry name" value="GTP1OBG"/>
</dbReference>
<dbReference type="SUPFAM" id="SSF82051">
    <property type="entry name" value="Obg GTP-binding protein N-terminal domain"/>
    <property type="match status" value="1"/>
</dbReference>
<dbReference type="SUPFAM" id="SSF52540">
    <property type="entry name" value="P-loop containing nucleoside triphosphate hydrolases"/>
    <property type="match status" value="1"/>
</dbReference>
<dbReference type="PROSITE" id="PS51710">
    <property type="entry name" value="G_OBG"/>
    <property type="match status" value="1"/>
</dbReference>
<dbReference type="PROSITE" id="PS00905">
    <property type="entry name" value="GTP1_OBG"/>
    <property type="match status" value="1"/>
</dbReference>
<dbReference type="PROSITE" id="PS51883">
    <property type="entry name" value="OBG"/>
    <property type="match status" value="1"/>
</dbReference>